<gene>
    <name type="ORF">UL47</name>
</gene>
<dbReference type="EMBL" id="X14112">
    <property type="protein sequence ID" value="CAA32297.1"/>
    <property type="molecule type" value="Genomic_DNA"/>
</dbReference>
<dbReference type="EMBL" id="DQ889502">
    <property type="protein sequence ID" value="ABI63508.1"/>
    <property type="molecule type" value="Genomic_DNA"/>
</dbReference>
<dbReference type="EMBL" id="FJ593289">
    <property type="protein sequence ID" value="ACM62270.1"/>
    <property type="molecule type" value="Genomic_DNA"/>
</dbReference>
<dbReference type="PIR" id="B30089">
    <property type="entry name" value="TNBEF7"/>
</dbReference>
<dbReference type="RefSeq" id="YP_009137122.1">
    <property type="nucleotide sequence ID" value="NC_001806.2"/>
</dbReference>
<dbReference type="BioGRID" id="971442">
    <property type="interactions" value="5"/>
</dbReference>
<dbReference type="IntAct" id="P10231">
    <property type="interactions" value="1"/>
</dbReference>
<dbReference type="MINT" id="P10231"/>
<dbReference type="DNASU" id="2703415"/>
<dbReference type="GeneID" id="2703415"/>
<dbReference type="KEGG" id="vg:2703415"/>
<dbReference type="Proteomes" id="UP000009294">
    <property type="component" value="Segment"/>
</dbReference>
<dbReference type="Proteomes" id="UP000180652">
    <property type="component" value="Segment"/>
</dbReference>
<dbReference type="GO" id="GO:0030430">
    <property type="term" value="C:host cell cytoplasm"/>
    <property type="evidence" value="ECO:0007669"/>
    <property type="project" value="UniProtKB-SubCell"/>
</dbReference>
<dbReference type="GO" id="GO:0042025">
    <property type="term" value="C:host cell nucleus"/>
    <property type="evidence" value="ECO:0007669"/>
    <property type="project" value="UniProtKB-SubCell"/>
</dbReference>
<dbReference type="GO" id="GO:0019033">
    <property type="term" value="C:viral tegument"/>
    <property type="evidence" value="ECO:0007669"/>
    <property type="project" value="UniProtKB-SubCell"/>
</dbReference>
<dbReference type="GO" id="GO:0003723">
    <property type="term" value="F:RNA binding"/>
    <property type="evidence" value="ECO:0007669"/>
    <property type="project" value="UniProtKB-KW"/>
</dbReference>
<dbReference type="GO" id="GO:0006355">
    <property type="term" value="P:regulation of DNA-templated transcription"/>
    <property type="evidence" value="ECO:0007669"/>
    <property type="project" value="InterPro"/>
</dbReference>
<dbReference type="InterPro" id="IPR005029">
    <property type="entry name" value="Herpes_UL47"/>
</dbReference>
<dbReference type="Pfam" id="PF03362">
    <property type="entry name" value="Herpes_UL47"/>
    <property type="match status" value="1"/>
</dbReference>
<sequence length="693" mass="73817">MSAREPAGRRRRASTRPRASPVADEPAGDGVGFMGYLRAVFRGDDDSELEALEEMAGDEPPVRRRREGPRARRRRASEAPPTSHRRASRQRPGPDAARSQSVRGRLDDDDEVPRGPPQARQGGYLGPVDARAILGRVGGSRVAPSPLFLEELQYEEDDYPEAVGPEDGGGARSPPKVEVLEGRVPGPELRAAFPLDRLAPQVAVWDESVRSALALGHPAGFYPCPDSAFGLSRVGVMHFASPDNPAVFFRQTLQQGEALAWYITGDGILDLTDRRTKTSPAQAMSFLADAVVRLAINGWVCGTRLHAEARGSDLDDRAAELRRQFASLTALRPVGAAAVPLLSAGGLVSPQSGPDAAVFRSSLGSLLYWPGVRALLDRDCRVAARYAGRMTYLATGALLARFNPDAVRCVLTREAAFLGRVLDVLAVMAEQTVQWLSVVVGARLHPHVHHPAFADVAREELFRALPLGSPAVVGAEHEALGDTAARRLLANSGLNAVLGAAVYALHTALATVTLKYARACGDAHRRRDDAAATRAILAAGLVLQRLLGFADTVVACVTLAAFDGGFTAPEVGTYTPLRYACVLRATQPLYARTTPAKFWADVRAAAEHVDLRPASSAPRAPVSGTADPAFLLKDLEPFPPAPVSGGSVLGPRVRVVDIMSQFRKLLMGDEGAAALRAHVSGRRATGLGGPPRP</sequence>
<evidence type="ECO:0000256" key="1">
    <source>
        <dbReference type="SAM" id="MobiDB-lite"/>
    </source>
</evidence>
<evidence type="ECO:0000269" key="2">
    <source>
    </source>
</evidence>
<evidence type="ECO:0000269" key="3">
    <source>
    </source>
</evidence>
<evidence type="ECO:0000269" key="4">
    <source>
    </source>
</evidence>
<evidence type="ECO:0000269" key="5">
    <source>
    </source>
</evidence>
<evidence type="ECO:0000269" key="6">
    <source>
    </source>
</evidence>
<evidence type="ECO:0000269" key="7">
    <source>
    </source>
</evidence>
<evidence type="ECO:0000269" key="8">
    <source>
    </source>
</evidence>
<evidence type="ECO:0000305" key="9"/>
<organismHost>
    <name type="scientific">Homo sapiens</name>
    <name type="common">Human</name>
    <dbReference type="NCBI Taxonomy" id="9606"/>
</organismHost>
<name>TEG5_HHV11</name>
<keyword id="KW-1035">Host cytoplasm</keyword>
<keyword id="KW-1048">Host nucleus</keyword>
<keyword id="KW-0426">Late protein</keyword>
<keyword id="KW-1185">Reference proteome</keyword>
<keyword id="KW-0694">RNA-binding</keyword>
<keyword id="KW-0804">Transcription</keyword>
<keyword id="KW-0805">Transcription regulation</keyword>
<keyword id="KW-0946">Virion</keyword>
<keyword id="KW-0920">Virion tegument</keyword>
<reference key="1">
    <citation type="journal article" date="1988" name="J. Gen. Virol.">
        <title>The complete DNA sequence of the long unique region in the genome of herpes simplex virus type 1.</title>
        <authorList>
            <person name="McGeoch D.J."/>
            <person name="Dalrymple M.A."/>
            <person name="Davison A.J."/>
            <person name="Dolan A."/>
            <person name="Frame M.C."/>
            <person name="McNab D."/>
            <person name="Perry L.J."/>
            <person name="Scott J.E."/>
            <person name="Taylor P."/>
        </authorList>
    </citation>
    <scope>NUCLEOTIDE SEQUENCE [LARGE SCALE GENOMIC DNA]</scope>
</reference>
<reference key="2">
    <citation type="journal article" date="2007" name="Microbes Infect.">
        <title>Determination and analysis of the DNA sequence of highly attenuated herpes simplex virus type 1 mutant HF10, a potential oncolytic virus.</title>
        <authorList>
            <person name="Ushijima Y."/>
            <person name="Luo C."/>
            <person name="Goshima F."/>
            <person name="Yamauchi Y."/>
            <person name="Kimura H."/>
            <person name="Nishiyama Y."/>
        </authorList>
    </citation>
    <scope>NUCLEOTIDE SEQUENCE [LARGE SCALE GENOMIC DNA]</scope>
    <source>
        <strain>Nonneuroinvasive mutant HF10</strain>
    </source>
</reference>
<reference key="3">
    <citation type="submission" date="2008-12" db="EMBL/GenBank/DDBJ databases">
        <title>Herpes simplex virus type 1 bacterial artificial chromosome.</title>
        <authorList>
            <person name="Cunningham C."/>
            <person name="Davison A.J."/>
        </authorList>
    </citation>
    <scope>NUCLEOTIDE SEQUENCE [LARGE SCALE GENOMIC DNA]</scope>
    <source>
        <strain>17 syn+</strain>
    </source>
</reference>
<reference key="4">
    <citation type="journal article" date="1990" name="J. Gen. Virol.">
        <title>Identification and characterization of the virion protein products of herpes simplex virus type 1 gene UL47.</title>
        <authorList>
            <person name="McLean G."/>
            <person name="Rixon F."/>
            <person name="Langeland N."/>
            <person name="Haarr L."/>
            <person name="Marsden H."/>
        </authorList>
    </citation>
    <scope>IDENTIFICATION OF PROTEIN</scope>
    <scope>SUBCELLULAR LOCATION</scope>
</reference>
<reference key="5">
    <citation type="journal article" date="2001" name="J. Virol.">
        <title>Nuclear localization and shuttling of herpes simplex virus tegument protein VP13/14.</title>
        <authorList>
            <person name="Donnelly M."/>
            <person name="Elliott G."/>
        </authorList>
    </citation>
    <scope>SUBCELLULAR LOCATION</scope>
    <scope>NUCLEAR LOCALIZATION SIGNAL</scope>
</reference>
<reference key="6">
    <citation type="journal article" date="2007" name="J. Virol.">
        <title>RNA binding by the herpes simplex virus type 1 nucleocytoplasmic shuttling protein UL47 is mediated by an N-terminal arginine-rich domain that also functions as its nuclear localization signal.</title>
        <authorList>
            <person name="Donnelly M."/>
            <person name="Verhagen J."/>
            <person name="Elliott G."/>
        </authorList>
    </citation>
    <scope>RNA-BINDING</scope>
    <scope>NUCLEAR LOCALIZATION SIGNAL</scope>
    <scope>SUBCELLULAR LOCATION</scope>
</reference>
<reference key="7">
    <citation type="journal article" date="2008" name="J. Virol.">
        <title>Characterization of a CRM1-dependent nuclear export signal in the C terminus of herpes simplex virus type 1 tegument protein UL47.</title>
        <authorList>
            <person name="Williams P."/>
            <person name="Verhagen J."/>
            <person name="Elliott G."/>
        </authorList>
    </citation>
    <scope>SUBCELLULAR LOCATION</scope>
    <scope>NUCLEAR EXPORT SIGNAL</scope>
</reference>
<reference key="8">
    <citation type="journal article" date="2011" name="J. Virol.">
        <title>Herpes simplex virus 1 protein kinase Us3 and major tegument protein UL47 reciprocally regulate their subcellular localization in infected cells.</title>
        <authorList>
            <person name="Kato A."/>
            <person name="Liu Z."/>
            <person name="Minowa A."/>
            <person name="Imai T."/>
            <person name="Tanaka M."/>
            <person name="Sugimoto K."/>
            <person name="Nishiyama Y."/>
            <person name="Arii J."/>
            <person name="Kawaguchi Y."/>
        </authorList>
    </citation>
    <scope>SUBCELLULAR LOCATION</scope>
    <scope>PHOSPHORYLATION</scope>
    <scope>INTERACTION WITH US3</scope>
</reference>
<reference key="9">
    <citation type="journal article" date="2013" name="Proc. Natl. Acad. Sci. U.S.A.">
        <title>Selective degradation of mRNAs by the HSV host shutoff RNase is regulated by the UL47 tegument protein.</title>
        <authorList>
            <person name="Shu M."/>
            <person name="Taddeo B."/>
            <person name="Zhang W."/>
            <person name="Roizman B."/>
        </authorList>
    </citation>
    <scope>FUNCTION</scope>
    <scope>INTERACTION WITH UL41/VHS</scope>
</reference>
<reference key="10">
    <citation type="journal article" date="2014" name="J. Virol.">
        <title>Herpes simplex virus 1 UL47 interacts with viral nuclear egress factors UL31, UL34, and Us3 and regulates viral nuclear egress.</title>
        <authorList>
            <person name="Liu Z."/>
            <person name="Kato A."/>
            <person name="Shindo K."/>
            <person name="Noda T."/>
            <person name="Sagara H."/>
            <person name="Kawaoka Y."/>
            <person name="Arii J."/>
            <person name="Kawaguchi Y."/>
        </authorList>
    </citation>
    <scope>FUNCTION</scope>
    <scope>INTERACTION WITH UL31 AND UL34</scope>
</reference>
<protein>
    <recommendedName>
        <fullName>Tegument protein UL47</fullName>
    </recommendedName>
    <alternativeName>
        <fullName>82/81 kDa tegument protein</fullName>
    </alternativeName>
    <alternativeName>
        <fullName>VMW82/81</fullName>
    </alternativeName>
    <alternativeName>
        <fullName>VP13/14</fullName>
    </alternativeName>
</protein>
<feature type="chain" id="PRO_0000116073" description="Tegument protein UL47">
    <location>
        <begin position="1"/>
        <end position="693"/>
    </location>
</feature>
<feature type="region of interest" description="Disordered" evidence="1">
    <location>
        <begin position="1"/>
        <end position="32"/>
    </location>
</feature>
<feature type="region of interest" description="Disordered" evidence="1">
    <location>
        <begin position="48"/>
        <end position="126"/>
    </location>
</feature>
<feature type="region of interest" description="RNA-binding">
    <location>
        <begin position="50"/>
        <end position="75"/>
    </location>
</feature>
<feature type="short sequence motif" description="Nuclear localization signal" evidence="2 3">
    <location>
        <begin position="63"/>
        <end position="75"/>
    </location>
</feature>
<feature type="short sequence motif" description="Nuclear export signal">
    <location>
        <begin position="647"/>
        <end position="670"/>
    </location>
</feature>
<feature type="compositionally biased region" description="Acidic residues" evidence="1">
    <location>
        <begin position="48"/>
        <end position="57"/>
    </location>
</feature>
<feature type="compositionally biased region" description="Basic residues" evidence="1">
    <location>
        <begin position="63"/>
        <end position="75"/>
    </location>
</feature>
<organism>
    <name type="scientific">Human herpesvirus 1 (strain 17)</name>
    <name type="common">HHV-1</name>
    <name type="synonym">Human herpes simplex virus 1</name>
    <dbReference type="NCBI Taxonomy" id="10299"/>
    <lineage>
        <taxon>Viruses</taxon>
        <taxon>Duplodnaviria</taxon>
        <taxon>Heunggongvirae</taxon>
        <taxon>Peploviricota</taxon>
        <taxon>Herviviricetes</taxon>
        <taxon>Herpesvirales</taxon>
        <taxon>Orthoherpesviridae</taxon>
        <taxon>Alphaherpesvirinae</taxon>
        <taxon>Simplexvirus</taxon>
        <taxon>Simplexvirus humanalpha1</taxon>
        <taxon>Human herpesvirus 1</taxon>
    </lineage>
</organism>
<proteinExistence type="evidence at protein level"/>
<accession>P10231</accession>
<accession>Q09I87</accession>
<comment type="function">
    <text evidence="7 8">Tegument protein that can bind to various RNA transcripts. Plays a role in the attenuation of selective viral and cellular mRNA degradation by modulating the activity of host shutoff RNase UL41/VHS. Also plays a role in the primary envelopment of virions in the perinuclear space, probably by interacting with two nuclear egress proteins UL31 and UL34.</text>
</comment>
<comment type="subunit">
    <text evidence="5 7 8">Interacts with US3 kinase. Interacts with UL31 and UL34; these interactions seem important for efficient virion nuclear egress. Interacts with UL41/VHS.</text>
</comment>
<comment type="subcellular location">
    <subcellularLocation>
        <location evidence="6">Virion tegument</location>
    </subcellularLocation>
    <subcellularLocation>
        <location evidence="3 4 5">Host nucleus</location>
    </subcellularLocation>
    <subcellularLocation>
        <location evidence="3 4">Host cytoplasm</location>
    </subcellularLocation>
    <text>Major tegument protein of the virion. Undergoes nucleocytoplasmic shuttling during infection. Localizes to the major sites of transcription in the infected cell nucleus.</text>
</comment>
<comment type="domain">
    <text evidence="4">The nuclear export signal is CRM1-dependent.</text>
</comment>
<comment type="PTM">
    <text evidence="5">Phosphorylated by US3. This phosphorylation is required for proper nuclear localization.</text>
</comment>
<comment type="miscellaneous">
    <text>Expressed in late in the infection.</text>
</comment>
<comment type="similarity">
    <text evidence="9">Belongs to the alphaherpesvirinae HHV-1 UL47 family.</text>
</comment>